<protein>
    <recommendedName>
        <fullName evidence="1">Small ribosomal subunit biogenesis GTPase RsgA 2</fullName>
        <ecNumber evidence="1">3.6.1.-</ecNumber>
    </recommendedName>
</protein>
<name>RSGA2_VIBPA</name>
<sequence>MNQTHTFCDTLISTSNPLKQLGWKPFFQQQLTLDDYDNTIFARVIAHHRSGYLLATEAGQVHLNVHHSLPNMTVGDWVILNEDQQFVRLLDRLSLFSRKAAGSKVAEQLIAANVDTVFIVCSLNHDFNLSRIERYLALVHEADVEPVIVLSKADLCDDVDELKSQVQKLDPLLVIETVNGLDAESTSKLMSWCNEGQTVAFIGSSGVGKSTLVNALLGQQEQSTGHIREDDSKGRHTTTSRSIHLLPAGGILIDTPGMREIQLVDCEAGVSEAFADVEALADHCRFGDCKHQTEPGCAVQAAIENGSLEVRRFNNYQKLLREQAFNGATLAEQRAQSRQFGKLTRNVMSDKRKRQQSY</sequence>
<accession>Q87FP9</accession>
<proteinExistence type="inferred from homology"/>
<keyword id="KW-0963">Cytoplasm</keyword>
<keyword id="KW-0342">GTP-binding</keyword>
<keyword id="KW-0378">Hydrolase</keyword>
<keyword id="KW-0479">Metal-binding</keyword>
<keyword id="KW-0547">Nucleotide-binding</keyword>
<keyword id="KW-0690">Ribosome biogenesis</keyword>
<keyword id="KW-0694">RNA-binding</keyword>
<keyword id="KW-0699">rRNA-binding</keyword>
<keyword id="KW-0862">Zinc</keyword>
<dbReference type="EC" id="3.6.1.-" evidence="1"/>
<dbReference type="EMBL" id="BA000032">
    <property type="protein sequence ID" value="BAC62972.1"/>
    <property type="molecule type" value="Genomic_DNA"/>
</dbReference>
<dbReference type="RefSeq" id="NP_801139.1">
    <property type="nucleotide sequence ID" value="NC_004605.1"/>
</dbReference>
<dbReference type="SMR" id="Q87FP9"/>
<dbReference type="GeneID" id="1192325"/>
<dbReference type="KEGG" id="vpa:VPA1629"/>
<dbReference type="PATRIC" id="fig|223926.6.peg.4549"/>
<dbReference type="eggNOG" id="COG1162">
    <property type="taxonomic scope" value="Bacteria"/>
</dbReference>
<dbReference type="HOGENOM" id="CLU_033617_0_1_6"/>
<dbReference type="Proteomes" id="UP000002493">
    <property type="component" value="Chromosome 2"/>
</dbReference>
<dbReference type="GO" id="GO:0005737">
    <property type="term" value="C:cytoplasm"/>
    <property type="evidence" value="ECO:0007669"/>
    <property type="project" value="UniProtKB-SubCell"/>
</dbReference>
<dbReference type="GO" id="GO:0005525">
    <property type="term" value="F:GTP binding"/>
    <property type="evidence" value="ECO:0007669"/>
    <property type="project" value="UniProtKB-UniRule"/>
</dbReference>
<dbReference type="GO" id="GO:0003924">
    <property type="term" value="F:GTPase activity"/>
    <property type="evidence" value="ECO:0007669"/>
    <property type="project" value="UniProtKB-UniRule"/>
</dbReference>
<dbReference type="GO" id="GO:0046872">
    <property type="term" value="F:metal ion binding"/>
    <property type="evidence" value="ECO:0007669"/>
    <property type="project" value="UniProtKB-KW"/>
</dbReference>
<dbReference type="GO" id="GO:0019843">
    <property type="term" value="F:rRNA binding"/>
    <property type="evidence" value="ECO:0007669"/>
    <property type="project" value="UniProtKB-KW"/>
</dbReference>
<dbReference type="GO" id="GO:0042274">
    <property type="term" value="P:ribosomal small subunit biogenesis"/>
    <property type="evidence" value="ECO:0007669"/>
    <property type="project" value="UniProtKB-UniRule"/>
</dbReference>
<dbReference type="CDD" id="cd01854">
    <property type="entry name" value="YjeQ_EngC"/>
    <property type="match status" value="1"/>
</dbReference>
<dbReference type="Gene3D" id="3.40.50.300">
    <property type="entry name" value="P-loop containing nucleotide triphosphate hydrolases"/>
    <property type="match status" value="1"/>
</dbReference>
<dbReference type="Gene3D" id="1.10.40.50">
    <property type="entry name" value="Probable gtpase engc, domain 3"/>
    <property type="match status" value="1"/>
</dbReference>
<dbReference type="HAMAP" id="MF_01820">
    <property type="entry name" value="GTPase_RsgA"/>
    <property type="match status" value="1"/>
</dbReference>
<dbReference type="InterPro" id="IPR030378">
    <property type="entry name" value="G_CP_dom"/>
</dbReference>
<dbReference type="InterPro" id="IPR027417">
    <property type="entry name" value="P-loop_NTPase"/>
</dbReference>
<dbReference type="InterPro" id="IPR004881">
    <property type="entry name" value="Ribosome_biogen_GTPase_RsgA"/>
</dbReference>
<dbReference type="InterPro" id="IPR010914">
    <property type="entry name" value="RsgA_GTPase_dom"/>
</dbReference>
<dbReference type="NCBIfam" id="TIGR00157">
    <property type="entry name" value="ribosome small subunit-dependent GTPase A"/>
    <property type="match status" value="1"/>
</dbReference>
<dbReference type="PANTHER" id="PTHR32120">
    <property type="entry name" value="SMALL RIBOSOMAL SUBUNIT BIOGENESIS GTPASE RSGA"/>
    <property type="match status" value="1"/>
</dbReference>
<dbReference type="PANTHER" id="PTHR32120:SF10">
    <property type="entry name" value="SMALL RIBOSOMAL SUBUNIT BIOGENESIS GTPASE RSGA"/>
    <property type="match status" value="1"/>
</dbReference>
<dbReference type="Pfam" id="PF03193">
    <property type="entry name" value="RsgA_GTPase"/>
    <property type="match status" value="1"/>
</dbReference>
<dbReference type="SUPFAM" id="SSF52540">
    <property type="entry name" value="P-loop containing nucleoside triphosphate hydrolases"/>
    <property type="match status" value="1"/>
</dbReference>
<dbReference type="PROSITE" id="PS50936">
    <property type="entry name" value="ENGC_GTPASE"/>
    <property type="match status" value="1"/>
</dbReference>
<dbReference type="PROSITE" id="PS51721">
    <property type="entry name" value="G_CP"/>
    <property type="match status" value="1"/>
</dbReference>
<evidence type="ECO:0000255" key="1">
    <source>
        <dbReference type="HAMAP-Rule" id="MF_01820"/>
    </source>
</evidence>
<evidence type="ECO:0000255" key="2">
    <source>
        <dbReference type="PROSITE-ProRule" id="PRU01058"/>
    </source>
</evidence>
<gene>
    <name evidence="1" type="primary">rsgA2</name>
    <name type="ordered locus">VPA1629</name>
</gene>
<organism>
    <name type="scientific">Vibrio parahaemolyticus serotype O3:K6 (strain RIMD 2210633)</name>
    <dbReference type="NCBI Taxonomy" id="223926"/>
    <lineage>
        <taxon>Bacteria</taxon>
        <taxon>Pseudomonadati</taxon>
        <taxon>Pseudomonadota</taxon>
        <taxon>Gammaproteobacteria</taxon>
        <taxon>Vibrionales</taxon>
        <taxon>Vibrionaceae</taxon>
        <taxon>Vibrio</taxon>
    </lineage>
</organism>
<comment type="function">
    <text evidence="1">One of several proteins that assist in the late maturation steps of the functional core of the 30S ribosomal subunit. Helps release RbfA from mature subunits. May play a role in the assembly of ribosomal proteins into the subunit. Circularly permuted GTPase that catalyzes slow GTP hydrolysis, GTPase activity is stimulated by the 30S ribosomal subunit.</text>
</comment>
<comment type="cofactor">
    <cofactor evidence="1">
        <name>Zn(2+)</name>
        <dbReference type="ChEBI" id="CHEBI:29105"/>
    </cofactor>
    <text evidence="1">Binds 1 zinc ion per subunit.</text>
</comment>
<comment type="subunit">
    <text evidence="1">Monomer. Associates with 30S ribosomal subunit, binds 16S rRNA.</text>
</comment>
<comment type="subcellular location">
    <subcellularLocation>
        <location evidence="1">Cytoplasm</location>
    </subcellularLocation>
</comment>
<comment type="similarity">
    <text evidence="1">Belongs to the TRAFAC class YlqF/YawG GTPase family. RsgA subfamily.</text>
</comment>
<feature type="chain" id="PRO_0000171541" description="Small ribosomal subunit biogenesis GTPase RsgA 2">
    <location>
        <begin position="1"/>
        <end position="358"/>
    </location>
</feature>
<feature type="domain" description="CP-type G" evidence="2">
    <location>
        <begin position="106"/>
        <end position="261"/>
    </location>
</feature>
<feature type="binding site" evidence="1">
    <location>
        <begin position="151"/>
        <end position="154"/>
    </location>
    <ligand>
        <name>GTP</name>
        <dbReference type="ChEBI" id="CHEBI:37565"/>
    </ligand>
</feature>
<feature type="binding site" evidence="1">
    <location>
        <begin position="203"/>
        <end position="211"/>
    </location>
    <ligand>
        <name>GTP</name>
        <dbReference type="ChEBI" id="CHEBI:37565"/>
    </ligand>
</feature>
<feature type="binding site" evidence="1">
    <location>
        <position position="284"/>
    </location>
    <ligand>
        <name>Zn(2+)</name>
        <dbReference type="ChEBI" id="CHEBI:29105"/>
    </ligand>
</feature>
<feature type="binding site" evidence="1">
    <location>
        <position position="289"/>
    </location>
    <ligand>
        <name>Zn(2+)</name>
        <dbReference type="ChEBI" id="CHEBI:29105"/>
    </ligand>
</feature>
<feature type="binding site" evidence="1">
    <location>
        <position position="291"/>
    </location>
    <ligand>
        <name>Zn(2+)</name>
        <dbReference type="ChEBI" id="CHEBI:29105"/>
    </ligand>
</feature>
<feature type="binding site" evidence="1">
    <location>
        <position position="297"/>
    </location>
    <ligand>
        <name>Zn(2+)</name>
        <dbReference type="ChEBI" id="CHEBI:29105"/>
    </ligand>
</feature>
<reference key="1">
    <citation type="journal article" date="2003" name="Lancet">
        <title>Genome sequence of Vibrio parahaemolyticus: a pathogenic mechanism distinct from that of V. cholerae.</title>
        <authorList>
            <person name="Makino K."/>
            <person name="Oshima K."/>
            <person name="Kurokawa K."/>
            <person name="Yokoyama K."/>
            <person name="Uda T."/>
            <person name="Tagomori K."/>
            <person name="Iijima Y."/>
            <person name="Najima M."/>
            <person name="Nakano M."/>
            <person name="Yamashita A."/>
            <person name="Kubota Y."/>
            <person name="Kimura S."/>
            <person name="Yasunaga T."/>
            <person name="Honda T."/>
            <person name="Shinagawa H."/>
            <person name="Hattori M."/>
            <person name="Iida T."/>
        </authorList>
    </citation>
    <scope>NUCLEOTIDE SEQUENCE [LARGE SCALE GENOMIC DNA]</scope>
    <source>
        <strain>RIMD 2210633</strain>
    </source>
</reference>